<comment type="function">
    <text evidence="1">Poorly processive, error-prone DNA polymerase involved in untargeted mutagenesis. Copies undamaged DNA at stalled replication forks, which arise in vivo from mismatched or misaligned primer ends. These misaligned primers can be extended by PolIV. Exhibits no 3'-5' exonuclease (proofreading) activity. May be involved in translesional synthesis, in conjunction with the beta clamp from PolIII.</text>
</comment>
<comment type="catalytic activity">
    <reaction evidence="1">
        <text>DNA(n) + a 2'-deoxyribonucleoside 5'-triphosphate = DNA(n+1) + diphosphate</text>
        <dbReference type="Rhea" id="RHEA:22508"/>
        <dbReference type="Rhea" id="RHEA-COMP:17339"/>
        <dbReference type="Rhea" id="RHEA-COMP:17340"/>
        <dbReference type="ChEBI" id="CHEBI:33019"/>
        <dbReference type="ChEBI" id="CHEBI:61560"/>
        <dbReference type="ChEBI" id="CHEBI:173112"/>
        <dbReference type="EC" id="2.7.7.7"/>
    </reaction>
</comment>
<comment type="cofactor">
    <cofactor evidence="1">
        <name>Mg(2+)</name>
        <dbReference type="ChEBI" id="CHEBI:18420"/>
    </cofactor>
    <text evidence="1">Binds 2 magnesium ions per subunit.</text>
</comment>
<comment type="subunit">
    <text evidence="1">Monomer.</text>
</comment>
<comment type="subcellular location">
    <subcellularLocation>
        <location evidence="1">Cytoplasm</location>
    </subcellularLocation>
</comment>
<comment type="similarity">
    <text evidence="1">Belongs to the DNA polymerase type-Y family.</text>
</comment>
<organism>
    <name type="scientific">Mannheimia succiniciproducens (strain KCTC 0769BP / MBEL55E)</name>
    <dbReference type="NCBI Taxonomy" id="221988"/>
    <lineage>
        <taxon>Bacteria</taxon>
        <taxon>Pseudomonadati</taxon>
        <taxon>Pseudomonadota</taxon>
        <taxon>Gammaproteobacteria</taxon>
        <taxon>Pasteurellales</taxon>
        <taxon>Pasteurellaceae</taxon>
        <taxon>Basfia</taxon>
    </lineage>
</organism>
<feature type="chain" id="PRO_1000137141" description="DNA polymerase IV">
    <location>
        <begin position="1"/>
        <end position="355"/>
    </location>
</feature>
<feature type="domain" description="UmuC" evidence="1">
    <location>
        <begin position="7"/>
        <end position="188"/>
    </location>
</feature>
<feature type="active site" evidence="1">
    <location>
        <position position="107"/>
    </location>
</feature>
<feature type="binding site" evidence="1">
    <location>
        <position position="11"/>
    </location>
    <ligand>
        <name>Mg(2+)</name>
        <dbReference type="ChEBI" id="CHEBI:18420"/>
    </ligand>
</feature>
<feature type="binding site" evidence="1">
    <location>
        <position position="106"/>
    </location>
    <ligand>
        <name>Mg(2+)</name>
        <dbReference type="ChEBI" id="CHEBI:18420"/>
    </ligand>
</feature>
<feature type="site" description="Substrate discrimination" evidence="1">
    <location>
        <position position="16"/>
    </location>
</feature>
<keyword id="KW-0963">Cytoplasm</keyword>
<keyword id="KW-0227">DNA damage</keyword>
<keyword id="KW-0234">DNA repair</keyword>
<keyword id="KW-0235">DNA replication</keyword>
<keyword id="KW-0238">DNA-binding</keyword>
<keyword id="KW-0239">DNA-directed DNA polymerase</keyword>
<keyword id="KW-0460">Magnesium</keyword>
<keyword id="KW-0479">Metal-binding</keyword>
<keyword id="KW-0515">Mutator protein</keyword>
<keyword id="KW-0548">Nucleotidyltransferase</keyword>
<keyword id="KW-0808">Transferase</keyword>
<proteinExistence type="inferred from homology"/>
<name>DPO4_MANSM</name>
<sequence length="355" mass="40542">MHKLRKIIHIDMDCFYAAVEMRENPALRDKPIAVGGSVQQRGVLTTCNYPARKFGLHSAMPTGQALKLCPDLILLPVNITLYKQVSHQIKQIFHRYTDNIEPLSLDEAYLDVTDCVQCSGSATWIAEEIRRAIFNELHLTASAGVAPLKFLAKIASDQNKPNGIFVITPGEVDNFVKTLPLSKIPGVGKVTGQKLLQMGLKTCGDVQKLDLTVLLNRFGKFGQRIWQYSHGIDEREVQSHWQRKSVGVEDTLLRNITDIEQGIVELERLYPILEQRIKRACPDIPFERFRKLGVKLKFEDFQVTTLEKSAVEFKRENFIVLLRQIWQRRQGRAIRLVGLQVTIPEQKAEQQMSLW</sequence>
<dbReference type="EC" id="2.7.7.7" evidence="1"/>
<dbReference type="EMBL" id="AE016827">
    <property type="protein sequence ID" value="AAU37742.1"/>
    <property type="molecule type" value="Genomic_DNA"/>
</dbReference>
<dbReference type="RefSeq" id="WP_011200310.1">
    <property type="nucleotide sequence ID" value="NC_006300.1"/>
</dbReference>
<dbReference type="SMR" id="Q65TG8"/>
<dbReference type="STRING" id="221988.MS1135"/>
<dbReference type="KEGG" id="msu:MS1135"/>
<dbReference type="eggNOG" id="COG0389">
    <property type="taxonomic scope" value="Bacteria"/>
</dbReference>
<dbReference type="HOGENOM" id="CLU_012348_1_2_6"/>
<dbReference type="OrthoDB" id="9808813at2"/>
<dbReference type="Proteomes" id="UP000000607">
    <property type="component" value="Chromosome"/>
</dbReference>
<dbReference type="GO" id="GO:0005829">
    <property type="term" value="C:cytosol"/>
    <property type="evidence" value="ECO:0007669"/>
    <property type="project" value="TreeGrafter"/>
</dbReference>
<dbReference type="GO" id="GO:0003684">
    <property type="term" value="F:damaged DNA binding"/>
    <property type="evidence" value="ECO:0007669"/>
    <property type="project" value="InterPro"/>
</dbReference>
<dbReference type="GO" id="GO:0003887">
    <property type="term" value="F:DNA-directed DNA polymerase activity"/>
    <property type="evidence" value="ECO:0007669"/>
    <property type="project" value="UniProtKB-UniRule"/>
</dbReference>
<dbReference type="GO" id="GO:0000287">
    <property type="term" value="F:magnesium ion binding"/>
    <property type="evidence" value="ECO:0007669"/>
    <property type="project" value="UniProtKB-UniRule"/>
</dbReference>
<dbReference type="GO" id="GO:0006261">
    <property type="term" value="P:DNA-templated DNA replication"/>
    <property type="evidence" value="ECO:0007669"/>
    <property type="project" value="UniProtKB-UniRule"/>
</dbReference>
<dbReference type="GO" id="GO:0042276">
    <property type="term" value="P:error-prone translesion synthesis"/>
    <property type="evidence" value="ECO:0007669"/>
    <property type="project" value="TreeGrafter"/>
</dbReference>
<dbReference type="GO" id="GO:0009432">
    <property type="term" value="P:SOS response"/>
    <property type="evidence" value="ECO:0007669"/>
    <property type="project" value="TreeGrafter"/>
</dbReference>
<dbReference type="CDD" id="cd03586">
    <property type="entry name" value="PolY_Pol_IV_kappa"/>
    <property type="match status" value="1"/>
</dbReference>
<dbReference type="FunFam" id="1.10.150.20:FF:000019">
    <property type="entry name" value="DNA polymerase IV"/>
    <property type="match status" value="1"/>
</dbReference>
<dbReference type="FunFam" id="3.30.70.270:FF:000002">
    <property type="entry name" value="DNA polymerase IV"/>
    <property type="match status" value="1"/>
</dbReference>
<dbReference type="FunFam" id="3.40.1170.60:FF:000001">
    <property type="entry name" value="DNA polymerase IV"/>
    <property type="match status" value="1"/>
</dbReference>
<dbReference type="Gene3D" id="3.30.70.270">
    <property type="match status" value="1"/>
</dbReference>
<dbReference type="Gene3D" id="3.40.1170.60">
    <property type="match status" value="1"/>
</dbReference>
<dbReference type="Gene3D" id="1.10.150.20">
    <property type="entry name" value="5' to 3' exonuclease, C-terminal subdomain"/>
    <property type="match status" value="1"/>
</dbReference>
<dbReference type="Gene3D" id="3.30.1490.100">
    <property type="entry name" value="DNA polymerase, Y-family, little finger domain"/>
    <property type="match status" value="1"/>
</dbReference>
<dbReference type="HAMAP" id="MF_01113">
    <property type="entry name" value="DNApol_IV"/>
    <property type="match status" value="1"/>
</dbReference>
<dbReference type="InterPro" id="IPR043502">
    <property type="entry name" value="DNA/RNA_pol_sf"/>
</dbReference>
<dbReference type="InterPro" id="IPR036775">
    <property type="entry name" value="DNA_pol_Y-fam_lit_finger_sf"/>
</dbReference>
<dbReference type="InterPro" id="IPR017961">
    <property type="entry name" value="DNA_pol_Y-fam_little_finger"/>
</dbReference>
<dbReference type="InterPro" id="IPR050116">
    <property type="entry name" value="DNA_polymerase-Y"/>
</dbReference>
<dbReference type="InterPro" id="IPR022880">
    <property type="entry name" value="DNApol_IV"/>
</dbReference>
<dbReference type="InterPro" id="IPR053848">
    <property type="entry name" value="IMS_HHH_1"/>
</dbReference>
<dbReference type="InterPro" id="IPR043128">
    <property type="entry name" value="Rev_trsase/Diguanyl_cyclase"/>
</dbReference>
<dbReference type="InterPro" id="IPR001126">
    <property type="entry name" value="UmuC"/>
</dbReference>
<dbReference type="NCBIfam" id="NF002677">
    <property type="entry name" value="PRK02406.1"/>
    <property type="match status" value="1"/>
</dbReference>
<dbReference type="PANTHER" id="PTHR11076:SF33">
    <property type="entry name" value="DNA POLYMERASE KAPPA"/>
    <property type="match status" value="1"/>
</dbReference>
<dbReference type="PANTHER" id="PTHR11076">
    <property type="entry name" value="DNA REPAIR POLYMERASE UMUC / TRANSFERASE FAMILY MEMBER"/>
    <property type="match status" value="1"/>
</dbReference>
<dbReference type="Pfam" id="PF00817">
    <property type="entry name" value="IMS"/>
    <property type="match status" value="1"/>
</dbReference>
<dbReference type="Pfam" id="PF11799">
    <property type="entry name" value="IMS_C"/>
    <property type="match status" value="1"/>
</dbReference>
<dbReference type="Pfam" id="PF21999">
    <property type="entry name" value="IMS_HHH_1"/>
    <property type="match status" value="1"/>
</dbReference>
<dbReference type="SUPFAM" id="SSF56672">
    <property type="entry name" value="DNA/RNA polymerases"/>
    <property type="match status" value="1"/>
</dbReference>
<dbReference type="SUPFAM" id="SSF100879">
    <property type="entry name" value="Lesion bypass DNA polymerase (Y-family), little finger domain"/>
    <property type="match status" value="1"/>
</dbReference>
<dbReference type="PROSITE" id="PS50173">
    <property type="entry name" value="UMUC"/>
    <property type="match status" value="1"/>
</dbReference>
<protein>
    <recommendedName>
        <fullName evidence="1">DNA polymerase IV</fullName>
        <shortName evidence="1">Pol IV</shortName>
        <ecNumber evidence="1">2.7.7.7</ecNumber>
    </recommendedName>
</protein>
<reference key="1">
    <citation type="journal article" date="2004" name="Nat. Biotechnol.">
        <title>The genome sequence of the capnophilic rumen bacterium Mannheimia succiniciproducens.</title>
        <authorList>
            <person name="Hong S.H."/>
            <person name="Kim J.S."/>
            <person name="Lee S.Y."/>
            <person name="In Y.H."/>
            <person name="Choi S.S."/>
            <person name="Rih J.-K."/>
            <person name="Kim C.H."/>
            <person name="Jeong H."/>
            <person name="Hur C.G."/>
            <person name="Kim J.J."/>
        </authorList>
    </citation>
    <scope>NUCLEOTIDE SEQUENCE [LARGE SCALE GENOMIC DNA]</scope>
    <source>
        <strain>KCTC 0769BP / MBEL55E</strain>
    </source>
</reference>
<accession>Q65TG8</accession>
<evidence type="ECO:0000255" key="1">
    <source>
        <dbReference type="HAMAP-Rule" id="MF_01113"/>
    </source>
</evidence>
<gene>
    <name evidence="1" type="primary">dinB</name>
    <name type="ordered locus">MS1135</name>
</gene>